<reference key="1">
    <citation type="journal article" date="1986" name="Proc. Natl. Acad. Sci. U.S.A.">
        <title>Cloning of cDNA and amino acid sequence of a cytokeratin expressed in oocytes of Xenopus laevis.</title>
        <authorList>
            <person name="Franz J.K."/>
            <person name="Franke W.W."/>
        </authorList>
    </citation>
    <scope>NUCLEOTIDE SEQUENCE [MRNA]</scope>
    <scope>TISSUE SPECIFICITY</scope>
    <scope>DEVELOPMENTAL STAGE</scope>
</reference>
<keyword id="KW-0175">Coiled coil</keyword>
<keyword id="KW-0963">Cytoplasm</keyword>
<keyword id="KW-0403">Intermediate filament</keyword>
<keyword id="KW-0416">Keratin</keyword>
<keyword id="KW-0539">Nucleus</keyword>
<keyword id="KW-0597">Phosphoprotein</keyword>
<keyword id="KW-1185">Reference proteome</keyword>
<feature type="chain" id="PRO_0000063743" description="Keratin, type II cytoskeletal 8">
    <location>
        <begin position="1"/>
        <end position="502"/>
    </location>
</feature>
<feature type="domain" description="IF rod" evidence="2">
    <location>
        <begin position="99"/>
        <end position="410"/>
    </location>
</feature>
<feature type="region of interest" description="Head">
    <location>
        <begin position="1"/>
        <end position="98"/>
    </location>
</feature>
<feature type="region of interest" description="Coil 1A">
    <location>
        <begin position="99"/>
        <end position="134"/>
    </location>
</feature>
<feature type="region of interest" description="Linker 1">
    <location>
        <begin position="135"/>
        <end position="151"/>
    </location>
</feature>
<feature type="region of interest" description="Coil 1B">
    <location>
        <begin position="152"/>
        <end position="243"/>
    </location>
</feature>
<feature type="region of interest" description="Linker 12">
    <location>
        <begin position="244"/>
        <end position="267"/>
    </location>
</feature>
<feature type="region of interest" description="Coil 2">
    <location>
        <begin position="268"/>
        <end position="406"/>
    </location>
</feature>
<feature type="region of interest" description="Necessary for interaction with PNN" evidence="1">
    <location>
        <begin position="269"/>
        <end position="390"/>
    </location>
</feature>
<feature type="region of interest" description="Tail">
    <location>
        <begin position="407"/>
        <end position="502"/>
    </location>
</feature>
<feature type="site" description="Stutter">
    <location>
        <position position="350"/>
    </location>
</feature>
<feature type="modified residue" description="Phosphoserine" evidence="1">
    <location>
        <position position="13"/>
    </location>
</feature>
<feature type="modified residue" description="Phosphoserine" evidence="1">
    <location>
        <position position="26"/>
    </location>
</feature>
<feature type="modified residue" description="Phosphoserine" evidence="1">
    <location>
        <position position="37"/>
    </location>
</feature>
<feature type="modified residue" description="Phosphoserine" evidence="1">
    <location>
        <position position="40"/>
    </location>
</feature>
<feature type="modified residue" description="Phosphoserine" evidence="1">
    <location>
        <position position="425"/>
    </location>
</feature>
<feature type="modified residue" description="Phosphoserine" evidence="1">
    <location>
        <position position="428"/>
    </location>
</feature>
<feature type="modified residue" description="Phosphoserine" evidence="1">
    <location>
        <position position="436"/>
    </location>
</feature>
<feature type="modified residue" description="Phosphoserine" evidence="1">
    <location>
        <position position="444"/>
    </location>
</feature>
<dbReference type="EMBL" id="M13811">
    <property type="protein sequence ID" value="AAA49891.1"/>
    <property type="molecule type" value="mRNA"/>
</dbReference>
<dbReference type="PIR" id="A23547">
    <property type="entry name" value="A23547"/>
</dbReference>
<dbReference type="SMR" id="P08776"/>
<dbReference type="AGR" id="Xenbase:XB-GENE-876943"/>
<dbReference type="Xenbase" id="XB-GENE-876943">
    <property type="gene designation" value="krt8.S"/>
</dbReference>
<dbReference type="Proteomes" id="UP000186698">
    <property type="component" value="Unplaced"/>
</dbReference>
<dbReference type="GO" id="GO:0005737">
    <property type="term" value="C:cytoplasm"/>
    <property type="evidence" value="ECO:0000250"/>
    <property type="project" value="UniProtKB"/>
</dbReference>
<dbReference type="GO" id="GO:0045095">
    <property type="term" value="C:keratin filament"/>
    <property type="evidence" value="ECO:0007669"/>
    <property type="project" value="InterPro"/>
</dbReference>
<dbReference type="GO" id="GO:0016363">
    <property type="term" value="C:nuclear matrix"/>
    <property type="evidence" value="ECO:0007669"/>
    <property type="project" value="UniProtKB-SubCell"/>
</dbReference>
<dbReference type="GO" id="GO:0005654">
    <property type="term" value="C:nucleoplasm"/>
    <property type="evidence" value="ECO:0007669"/>
    <property type="project" value="UniProtKB-SubCell"/>
</dbReference>
<dbReference type="FunFam" id="1.20.5.1160:FF:000001">
    <property type="entry name" value="Keratin type II"/>
    <property type="match status" value="1"/>
</dbReference>
<dbReference type="FunFam" id="1.20.5.170:FF:000004">
    <property type="entry name" value="Keratin, type II cytoskeletal 5"/>
    <property type="match status" value="1"/>
</dbReference>
<dbReference type="FunFam" id="1.20.5.500:FF:000001">
    <property type="entry name" value="Type II keratin 23"/>
    <property type="match status" value="1"/>
</dbReference>
<dbReference type="Gene3D" id="1.20.5.170">
    <property type="match status" value="1"/>
</dbReference>
<dbReference type="Gene3D" id="1.20.5.500">
    <property type="entry name" value="Single helix bin"/>
    <property type="match status" value="1"/>
</dbReference>
<dbReference type="Gene3D" id="1.20.5.1160">
    <property type="entry name" value="Vasodilator-stimulated phosphoprotein"/>
    <property type="match status" value="1"/>
</dbReference>
<dbReference type="InterPro" id="IPR018039">
    <property type="entry name" value="IF_conserved"/>
</dbReference>
<dbReference type="InterPro" id="IPR039008">
    <property type="entry name" value="IF_rod_dom"/>
</dbReference>
<dbReference type="InterPro" id="IPR032444">
    <property type="entry name" value="Keratin_2_head"/>
</dbReference>
<dbReference type="InterPro" id="IPR003054">
    <property type="entry name" value="Keratin_II"/>
</dbReference>
<dbReference type="PANTHER" id="PTHR45616">
    <property type="entry name" value="GATA-TYPE DOMAIN-CONTAINING PROTEIN"/>
    <property type="match status" value="1"/>
</dbReference>
<dbReference type="PANTHER" id="PTHR45616:SF26">
    <property type="entry name" value="KERATIN, TYPE II CYTOSKELETAL 8"/>
    <property type="match status" value="1"/>
</dbReference>
<dbReference type="Pfam" id="PF00038">
    <property type="entry name" value="Filament"/>
    <property type="match status" value="1"/>
</dbReference>
<dbReference type="Pfam" id="PF16208">
    <property type="entry name" value="Keratin_2_head"/>
    <property type="match status" value="1"/>
</dbReference>
<dbReference type="PRINTS" id="PR01276">
    <property type="entry name" value="TYPE2KERATIN"/>
</dbReference>
<dbReference type="SMART" id="SM01391">
    <property type="entry name" value="Filament"/>
    <property type="match status" value="1"/>
</dbReference>
<dbReference type="SUPFAM" id="SSF64593">
    <property type="entry name" value="Intermediate filament protein, coiled coil region"/>
    <property type="match status" value="3"/>
</dbReference>
<dbReference type="PROSITE" id="PS00226">
    <property type="entry name" value="IF_ROD_1"/>
    <property type="match status" value="1"/>
</dbReference>
<dbReference type="PROSITE" id="PS51842">
    <property type="entry name" value="IF_ROD_2"/>
    <property type="match status" value="1"/>
</dbReference>
<proteinExistence type="evidence at transcript level"/>
<sequence>MSVRSTKVTYRTSSAAPRSGGFSSFSYSGAPMASRASSASFSLGSSYGGASRFGSGYRSGFGGAGVGSAGITSVSVNQSLLAPLNLEIDPSIQQVRTEEKEQIKTLNNKFASFIDKVRFLEQQNKMLETKWNLLQNQKTTRSNMDGMFEAYISNLRRQLDGLGQDKMRLESELGNMQGLVEDFKNKYEDEINRRTELENEFVLLKKDVDEAYMNKVQLEARLEALTDEINFLRQLYEEELREMQSQISDTSVVLSMDNNRSLDLDGIIAEVRAQYEDVANKSRLEVENMYQVKYQELQTSAGRYGDDLKNTKTEISELTRYTTRLQSEIDALKAQRANLEAQIAEAEERGELALKDARNKLAELEAALQKAKQDMSRQLRDYQELMNVKLALDIEIATYRKLLEGEESRLESGFQNLSIQTKTVSGVSSGFGGGISSGFSNGVSSGFGGGYGGGYGGGYSYSSNVSSYIGDTKTSKRRLLVKTVETKDGRVLSESSDVFSKP</sequence>
<organism>
    <name type="scientific">Xenopus laevis</name>
    <name type="common">African clawed frog</name>
    <dbReference type="NCBI Taxonomy" id="8355"/>
    <lineage>
        <taxon>Eukaryota</taxon>
        <taxon>Metazoa</taxon>
        <taxon>Chordata</taxon>
        <taxon>Craniata</taxon>
        <taxon>Vertebrata</taxon>
        <taxon>Euteleostomi</taxon>
        <taxon>Amphibia</taxon>
        <taxon>Batrachia</taxon>
        <taxon>Anura</taxon>
        <taxon>Pipoidea</taxon>
        <taxon>Pipidae</taxon>
        <taxon>Xenopodinae</taxon>
        <taxon>Xenopus</taxon>
        <taxon>Xenopus</taxon>
    </lineage>
</organism>
<evidence type="ECO:0000250" key="1"/>
<evidence type="ECO:0000255" key="2">
    <source>
        <dbReference type="PROSITE-ProRule" id="PRU01188"/>
    </source>
</evidence>
<evidence type="ECO:0000269" key="3">
    <source>
    </source>
</evidence>
<protein>
    <recommendedName>
        <fullName>Keratin, type II cytoskeletal 8</fullName>
    </recommendedName>
    <alternativeName>
        <fullName>Cytokeratin-8</fullName>
        <shortName>CK-8</shortName>
    </alternativeName>
    <alternativeName>
        <fullName>Keratin-8</fullName>
        <shortName>K8</shortName>
    </alternativeName>
</protein>
<name>K2C8_XENLA</name>
<accession>P08776</accession>
<comment type="function">
    <text evidence="1">Together with KRT19, helps to link the contractile apparatus to dystrophin at the costameres of striated muscle.</text>
</comment>
<comment type="subunit">
    <text evidence="1">Heterotetramer of two type I and two type II keratins. Keratin-8 associates with keratin-18 (By similarity).</text>
</comment>
<comment type="subcellular location">
    <subcellularLocation>
        <location evidence="1">Cytoplasm</location>
    </subcellularLocation>
    <subcellularLocation>
        <location evidence="1">Nucleus</location>
        <location evidence="1">Nucleoplasm</location>
    </subcellularLocation>
    <subcellularLocation>
        <location evidence="1">Nucleus matrix</location>
    </subcellularLocation>
</comment>
<comment type="tissue specificity">
    <text evidence="3">Expressed in oocytes, eggs, embryos, liver and intestinal mucosa.</text>
</comment>
<comment type="developmental stage">
    <text evidence="3">Synthesized in the oocyte in early and late embryonic stages.</text>
</comment>
<comment type="miscellaneous">
    <text>There are two types of cytoskeletal and microfibrillar keratin: I (acidic; 40-55 kDa) and II (neutral to basic; 56-70 kDa).</text>
</comment>
<comment type="similarity">
    <text evidence="2">Belongs to the intermediate filament family.</text>
</comment>